<protein>
    <recommendedName>
        <fullName evidence="1">Ribosomal RNA small subunit methyltransferase J</fullName>
        <ecNumber evidence="1">2.1.1.242</ecNumber>
    </recommendedName>
    <alternativeName>
        <fullName evidence="1">16S rRNA m2G1516 methyltransferase</fullName>
    </alternativeName>
    <alternativeName>
        <fullName evidence="1">rRNA (guanine-N(2)-)-methyltransferase</fullName>
    </alternativeName>
</protein>
<accession>B7M2Q7</accession>
<proteinExistence type="inferred from homology"/>
<comment type="function">
    <text evidence="1">Specifically methylates the guanosine in position 1516 of 16S rRNA.</text>
</comment>
<comment type="catalytic activity">
    <reaction evidence="1">
        <text>guanosine(1516) in 16S rRNA + S-adenosyl-L-methionine = N(2)-methylguanosine(1516) in 16S rRNA + S-adenosyl-L-homocysteine + H(+)</text>
        <dbReference type="Rhea" id="RHEA:43220"/>
        <dbReference type="Rhea" id="RHEA-COMP:10412"/>
        <dbReference type="Rhea" id="RHEA-COMP:10413"/>
        <dbReference type="ChEBI" id="CHEBI:15378"/>
        <dbReference type="ChEBI" id="CHEBI:57856"/>
        <dbReference type="ChEBI" id="CHEBI:59789"/>
        <dbReference type="ChEBI" id="CHEBI:74269"/>
        <dbReference type="ChEBI" id="CHEBI:74481"/>
        <dbReference type="EC" id="2.1.1.242"/>
    </reaction>
</comment>
<comment type="subcellular location">
    <subcellularLocation>
        <location evidence="1">Cytoplasm</location>
    </subcellularLocation>
</comment>
<comment type="similarity">
    <text evidence="1">Belongs to the methyltransferase superfamily. RsmJ family.</text>
</comment>
<keyword id="KW-0963">Cytoplasm</keyword>
<keyword id="KW-0489">Methyltransferase</keyword>
<keyword id="KW-0698">rRNA processing</keyword>
<keyword id="KW-0949">S-adenosyl-L-methionine</keyword>
<keyword id="KW-0808">Transferase</keyword>
<dbReference type="EC" id="2.1.1.242" evidence="1"/>
<dbReference type="EMBL" id="CU928160">
    <property type="protein sequence ID" value="CAR00440.1"/>
    <property type="molecule type" value="Genomic_DNA"/>
</dbReference>
<dbReference type="RefSeq" id="WP_000686608.1">
    <property type="nucleotide sequence ID" value="NC_011741.1"/>
</dbReference>
<dbReference type="SMR" id="B7M2Q7"/>
<dbReference type="GeneID" id="93778496"/>
<dbReference type="KEGG" id="ecr:ECIAI1_3642"/>
<dbReference type="HOGENOM" id="CLU_076324_0_0_6"/>
<dbReference type="GO" id="GO:0005737">
    <property type="term" value="C:cytoplasm"/>
    <property type="evidence" value="ECO:0007669"/>
    <property type="project" value="UniProtKB-SubCell"/>
</dbReference>
<dbReference type="GO" id="GO:0008990">
    <property type="term" value="F:rRNA (guanine-N2-)-methyltransferase activity"/>
    <property type="evidence" value="ECO:0007669"/>
    <property type="project" value="UniProtKB-UniRule"/>
</dbReference>
<dbReference type="CDD" id="cd02440">
    <property type="entry name" value="AdoMet_MTases"/>
    <property type="match status" value="1"/>
</dbReference>
<dbReference type="FunFam" id="3.40.1630.10:FF:000001">
    <property type="entry name" value="Ribosomal RNA small subunit methyltransferase J"/>
    <property type="match status" value="1"/>
</dbReference>
<dbReference type="FunFam" id="3.40.50.150:FF:000072">
    <property type="entry name" value="Ribosomal RNA small subunit methyltransferase J"/>
    <property type="match status" value="1"/>
</dbReference>
<dbReference type="Gene3D" id="3.40.50.150">
    <property type="entry name" value="Vaccinia Virus protein VP39"/>
    <property type="match status" value="1"/>
</dbReference>
<dbReference type="Gene3D" id="3.40.1630.10">
    <property type="entry name" value="YhiQ-like domain"/>
    <property type="match status" value="1"/>
</dbReference>
<dbReference type="HAMAP" id="MF_01523">
    <property type="entry name" value="16SrRNA_methyltr_J"/>
    <property type="match status" value="1"/>
</dbReference>
<dbReference type="InterPro" id="IPR007536">
    <property type="entry name" value="16SrRNA_methylTrfase_J"/>
</dbReference>
<dbReference type="InterPro" id="IPR029063">
    <property type="entry name" value="SAM-dependent_MTases_sf"/>
</dbReference>
<dbReference type="NCBIfam" id="NF008012">
    <property type="entry name" value="PRK10742.1"/>
    <property type="match status" value="1"/>
</dbReference>
<dbReference type="PANTHER" id="PTHR36112">
    <property type="entry name" value="RIBOSOMAL RNA SMALL SUBUNIT METHYLTRANSFERASE J"/>
    <property type="match status" value="1"/>
</dbReference>
<dbReference type="PANTHER" id="PTHR36112:SF1">
    <property type="entry name" value="RIBOSOMAL RNA SMALL SUBUNIT METHYLTRANSFERASE J"/>
    <property type="match status" value="1"/>
</dbReference>
<dbReference type="Pfam" id="PF04445">
    <property type="entry name" value="SAM_MT"/>
    <property type="match status" value="1"/>
</dbReference>
<dbReference type="SUPFAM" id="SSF53335">
    <property type="entry name" value="S-adenosyl-L-methionine-dependent methyltransferases"/>
    <property type="match status" value="1"/>
</dbReference>
<organism>
    <name type="scientific">Escherichia coli O8 (strain IAI1)</name>
    <dbReference type="NCBI Taxonomy" id="585034"/>
    <lineage>
        <taxon>Bacteria</taxon>
        <taxon>Pseudomonadati</taxon>
        <taxon>Pseudomonadota</taxon>
        <taxon>Gammaproteobacteria</taxon>
        <taxon>Enterobacterales</taxon>
        <taxon>Enterobacteriaceae</taxon>
        <taxon>Escherichia</taxon>
    </lineage>
</organism>
<evidence type="ECO:0000255" key="1">
    <source>
        <dbReference type="HAMAP-Rule" id="MF_01523"/>
    </source>
</evidence>
<gene>
    <name evidence="1" type="primary">rsmJ</name>
    <name type="synonym">yhiQ</name>
    <name type="ordered locus">ECIAI1_3642</name>
</gene>
<sequence length="250" mass="26919">MKICLIDETGAGDGALSVLAARWGLEHDEDNLMALVLTPEHLELRKRDEPKLGGIFVDFVGGAMAHRRKFGGGRGEAVAKAVGIKGDYLPDVVDATAGLGRDAFVLASVGCRVRMLERNPVVAALLDDGLARGYADAEIGGWLQERLQLIHASSLTALTDITPRPQVVYLDPMFPHKQKSALVKKEMRVFQSLVGPDLDADGLLEPARLLATKRVVVKRPDYAPPLANVATPNAVVTKGHRFDIYAGTPV</sequence>
<feature type="chain" id="PRO_1000198498" description="Ribosomal RNA small subunit methyltransferase J">
    <location>
        <begin position="1"/>
        <end position="250"/>
    </location>
</feature>
<feature type="binding site" evidence="1">
    <location>
        <begin position="101"/>
        <end position="102"/>
    </location>
    <ligand>
        <name>S-adenosyl-L-methionine</name>
        <dbReference type="ChEBI" id="CHEBI:59789"/>
    </ligand>
</feature>
<feature type="binding site" evidence="1">
    <location>
        <begin position="117"/>
        <end position="118"/>
    </location>
    <ligand>
        <name>S-adenosyl-L-methionine</name>
        <dbReference type="ChEBI" id="CHEBI:59789"/>
    </ligand>
</feature>
<feature type="binding site" evidence="1">
    <location>
        <begin position="153"/>
        <end position="154"/>
    </location>
    <ligand>
        <name>S-adenosyl-L-methionine</name>
        <dbReference type="ChEBI" id="CHEBI:59789"/>
    </ligand>
</feature>
<feature type="binding site" evidence="1">
    <location>
        <position position="171"/>
    </location>
    <ligand>
        <name>S-adenosyl-L-methionine</name>
        <dbReference type="ChEBI" id="CHEBI:59789"/>
    </ligand>
</feature>
<name>RSMJ_ECO8A</name>
<reference key="1">
    <citation type="journal article" date="2009" name="PLoS Genet.">
        <title>Organised genome dynamics in the Escherichia coli species results in highly diverse adaptive paths.</title>
        <authorList>
            <person name="Touchon M."/>
            <person name="Hoede C."/>
            <person name="Tenaillon O."/>
            <person name="Barbe V."/>
            <person name="Baeriswyl S."/>
            <person name="Bidet P."/>
            <person name="Bingen E."/>
            <person name="Bonacorsi S."/>
            <person name="Bouchier C."/>
            <person name="Bouvet O."/>
            <person name="Calteau A."/>
            <person name="Chiapello H."/>
            <person name="Clermont O."/>
            <person name="Cruveiller S."/>
            <person name="Danchin A."/>
            <person name="Diard M."/>
            <person name="Dossat C."/>
            <person name="Karoui M.E."/>
            <person name="Frapy E."/>
            <person name="Garry L."/>
            <person name="Ghigo J.M."/>
            <person name="Gilles A.M."/>
            <person name="Johnson J."/>
            <person name="Le Bouguenec C."/>
            <person name="Lescat M."/>
            <person name="Mangenot S."/>
            <person name="Martinez-Jehanne V."/>
            <person name="Matic I."/>
            <person name="Nassif X."/>
            <person name="Oztas S."/>
            <person name="Petit M.A."/>
            <person name="Pichon C."/>
            <person name="Rouy Z."/>
            <person name="Ruf C.S."/>
            <person name="Schneider D."/>
            <person name="Tourret J."/>
            <person name="Vacherie B."/>
            <person name="Vallenet D."/>
            <person name="Medigue C."/>
            <person name="Rocha E.P.C."/>
            <person name="Denamur E."/>
        </authorList>
    </citation>
    <scope>NUCLEOTIDE SEQUENCE [LARGE SCALE GENOMIC DNA]</scope>
    <source>
        <strain>IAI1</strain>
    </source>
</reference>